<proteinExistence type="inferred from homology"/>
<reference key="1">
    <citation type="submission" date="2005-03" db="EMBL/GenBank/DDBJ databases">
        <title>Annotation of the Saccharomyces cerevisiae RM11-1a genome.</title>
        <authorList>
            <consortium name="The Broad Institute Genome Sequencing Platform"/>
            <person name="Birren B.W."/>
            <person name="Lander E.S."/>
            <person name="Galagan J.E."/>
            <person name="Nusbaum C."/>
            <person name="Devon K."/>
            <person name="Cuomo C."/>
            <person name="Jaffe D.B."/>
            <person name="Butler J."/>
            <person name="Alvarez P."/>
            <person name="Gnerre S."/>
            <person name="Grabherr M."/>
            <person name="Kleber M."/>
            <person name="Mauceli E.W."/>
            <person name="Brockman W."/>
            <person name="MacCallum I.A."/>
            <person name="Rounsley S."/>
            <person name="Young S.K."/>
            <person name="LaButti K."/>
            <person name="Pushparaj V."/>
            <person name="DeCaprio D."/>
            <person name="Crawford M."/>
            <person name="Koehrsen M."/>
            <person name="Engels R."/>
            <person name="Montgomery P."/>
            <person name="Pearson M."/>
            <person name="Howarth C."/>
            <person name="Larson L."/>
            <person name="Luoma S."/>
            <person name="White J."/>
            <person name="O'Leary S."/>
            <person name="Kodira C.D."/>
            <person name="Zeng Q."/>
            <person name="Yandava C."/>
            <person name="Alvarado L."/>
            <person name="Pratt S."/>
            <person name="Kruglyak L."/>
        </authorList>
    </citation>
    <scope>NUCLEOTIDE SEQUENCE [LARGE SCALE GENOMIC DNA]</scope>
    <source>
        <strain>RM11-1a</strain>
    </source>
</reference>
<dbReference type="EMBL" id="CH408047">
    <property type="protein sequence ID" value="EDV11642.1"/>
    <property type="molecule type" value="Genomic_DNA"/>
</dbReference>
<dbReference type="SMR" id="B3LM39"/>
<dbReference type="HOGENOM" id="CLU_026673_3_3_1"/>
<dbReference type="OrthoDB" id="39914at4893"/>
<dbReference type="Proteomes" id="UP000008335">
    <property type="component" value="Unassembled WGS sequence"/>
</dbReference>
<dbReference type="GO" id="GO:0005811">
    <property type="term" value="C:lipid droplet"/>
    <property type="evidence" value="ECO:0007669"/>
    <property type="project" value="UniProtKB-SubCell"/>
</dbReference>
<dbReference type="GO" id="GO:0005739">
    <property type="term" value="C:mitochondrion"/>
    <property type="evidence" value="ECO:0007669"/>
    <property type="project" value="UniProtKB-SubCell"/>
</dbReference>
<dbReference type="CDD" id="cd08247">
    <property type="entry name" value="AST1_like"/>
    <property type="match status" value="1"/>
</dbReference>
<dbReference type="Gene3D" id="3.90.180.10">
    <property type="entry name" value="Medium-chain alcohol dehydrogenases, catalytic domain"/>
    <property type="match status" value="1"/>
</dbReference>
<dbReference type="Gene3D" id="3.40.50.720">
    <property type="entry name" value="NAD(P)-binding Rossmann-like Domain"/>
    <property type="match status" value="1"/>
</dbReference>
<dbReference type="InterPro" id="IPR013154">
    <property type="entry name" value="ADH-like_N"/>
</dbReference>
<dbReference type="InterPro" id="IPR011032">
    <property type="entry name" value="GroES-like_sf"/>
</dbReference>
<dbReference type="InterPro" id="IPR036291">
    <property type="entry name" value="NAD(P)-bd_dom_sf"/>
</dbReference>
<dbReference type="InterPro" id="IPR050700">
    <property type="entry name" value="YIM1/Zinc_Alcohol_DH_Fams"/>
</dbReference>
<dbReference type="PANTHER" id="PTHR11695">
    <property type="entry name" value="ALCOHOL DEHYDROGENASE RELATED"/>
    <property type="match status" value="1"/>
</dbReference>
<dbReference type="PANTHER" id="PTHR11695:SF294">
    <property type="entry name" value="RETICULON-4-INTERACTING PROTEIN 1, MITOCHONDRIAL"/>
    <property type="match status" value="1"/>
</dbReference>
<dbReference type="Pfam" id="PF08240">
    <property type="entry name" value="ADH_N"/>
    <property type="match status" value="1"/>
</dbReference>
<dbReference type="Pfam" id="PF13602">
    <property type="entry name" value="ADH_zinc_N_2"/>
    <property type="match status" value="1"/>
</dbReference>
<dbReference type="SUPFAM" id="SSF50129">
    <property type="entry name" value="GroES-like"/>
    <property type="match status" value="1"/>
</dbReference>
<dbReference type="SUPFAM" id="SSF51735">
    <property type="entry name" value="NAD(P)-binding Rossmann-fold domains"/>
    <property type="match status" value="1"/>
</dbReference>
<organism>
    <name type="scientific">Saccharomyces cerevisiae (strain RM11-1a)</name>
    <name type="common">Baker's yeast</name>
    <dbReference type="NCBI Taxonomy" id="285006"/>
    <lineage>
        <taxon>Eukaryota</taxon>
        <taxon>Fungi</taxon>
        <taxon>Dikarya</taxon>
        <taxon>Ascomycota</taxon>
        <taxon>Saccharomycotina</taxon>
        <taxon>Saccharomycetes</taxon>
        <taxon>Saccharomycetales</taxon>
        <taxon>Saccharomycetaceae</taxon>
        <taxon>Saccharomyces</taxon>
    </lineage>
</organism>
<sequence>MSDEIVTNKSVTYVNNTTPVTITSSELDLRSCYQDDEVVIEVHAAALNPIDFITHQLCNSYIFGKYPKTYSRDYSGVIIKAGKDVDNRWKVGDKVNGMYSHIYGERGTLTHYLILNPAKDIPITHMVEVPKDENDPYDDFVYAAAWPLTFGTAFSTLYDFKKDWTSDSKVLVIGASTSVSYAFVHIAKNYFNIGTVVGICSKNSIERNKKLGYDYLVPYDEGSIVENVKKLKQIVLENDKFDMIFDSVGNHDFFPVIDQFLKPKAKNSFYVTIAGNNKANYKNISWRDFVSLSSILKAINPFKKYNWRFGHPYPPNNFIEVGNEMIKKGTYKPPIDSVYEFDQYKEAIDRLMSNRAKGKVVVKMK</sequence>
<gene>
    <name type="primary">YIM1</name>
    <name type="ORF">SCRG_02042</name>
</gene>
<feature type="chain" id="PRO_0000409680" description="Protein YIM1">
    <location>
        <begin position="1"/>
        <end position="365"/>
    </location>
</feature>
<name>YIM1_YEAS1</name>
<comment type="subcellular location">
    <subcellularLocation>
        <location evidence="1">Lipid droplet</location>
    </subcellularLocation>
    <subcellularLocation>
        <location evidence="1">Mitochondrion</location>
    </subcellularLocation>
</comment>
<comment type="similarity">
    <text evidence="2">Belongs to the YIM1 family.</text>
</comment>
<accession>B3LM39</accession>
<protein>
    <recommendedName>
        <fullName>Protein YIM1</fullName>
    </recommendedName>
</protein>
<keyword id="KW-0551">Lipid droplet</keyword>
<keyword id="KW-0496">Mitochondrion</keyword>
<evidence type="ECO:0000250" key="1"/>
<evidence type="ECO:0000305" key="2"/>